<sequence>MADITDIKTILYTEKTLNLQEGGMVVIQTSPKMTKTSLKAVLKEYFGFTPLKINSLRIDGKVKRFRGRLGVRDNFKKFYVKLPEGVSLENVGA</sequence>
<dbReference type="EMBL" id="CP000776">
    <property type="protein sequence ID" value="ABS51893.1"/>
    <property type="molecule type" value="Genomic_DNA"/>
</dbReference>
<dbReference type="RefSeq" id="WP_011991546.1">
    <property type="nucleotide sequence ID" value="NC_009714.1"/>
</dbReference>
<dbReference type="SMR" id="A7HZK8"/>
<dbReference type="STRING" id="360107.CHAB381_0086"/>
<dbReference type="KEGG" id="cha:CHAB381_0086"/>
<dbReference type="eggNOG" id="COG0089">
    <property type="taxonomic scope" value="Bacteria"/>
</dbReference>
<dbReference type="HOGENOM" id="CLU_037562_3_1_7"/>
<dbReference type="OrthoDB" id="5339807at2"/>
<dbReference type="Proteomes" id="UP000002407">
    <property type="component" value="Chromosome"/>
</dbReference>
<dbReference type="GO" id="GO:1990904">
    <property type="term" value="C:ribonucleoprotein complex"/>
    <property type="evidence" value="ECO:0007669"/>
    <property type="project" value="UniProtKB-KW"/>
</dbReference>
<dbReference type="GO" id="GO:0005840">
    <property type="term" value="C:ribosome"/>
    <property type="evidence" value="ECO:0007669"/>
    <property type="project" value="UniProtKB-KW"/>
</dbReference>
<dbReference type="GO" id="GO:0019843">
    <property type="term" value="F:rRNA binding"/>
    <property type="evidence" value="ECO:0007669"/>
    <property type="project" value="UniProtKB-UniRule"/>
</dbReference>
<dbReference type="GO" id="GO:0003735">
    <property type="term" value="F:structural constituent of ribosome"/>
    <property type="evidence" value="ECO:0007669"/>
    <property type="project" value="InterPro"/>
</dbReference>
<dbReference type="GO" id="GO:0006412">
    <property type="term" value="P:translation"/>
    <property type="evidence" value="ECO:0007669"/>
    <property type="project" value="UniProtKB-UniRule"/>
</dbReference>
<dbReference type="Gene3D" id="3.30.70.330">
    <property type="match status" value="1"/>
</dbReference>
<dbReference type="HAMAP" id="MF_01369_B">
    <property type="entry name" value="Ribosomal_uL23_B"/>
    <property type="match status" value="1"/>
</dbReference>
<dbReference type="InterPro" id="IPR012677">
    <property type="entry name" value="Nucleotide-bd_a/b_plait_sf"/>
</dbReference>
<dbReference type="InterPro" id="IPR013025">
    <property type="entry name" value="Ribosomal_uL23-like"/>
</dbReference>
<dbReference type="InterPro" id="IPR012678">
    <property type="entry name" value="Ribosomal_uL23/eL15/eS24_sf"/>
</dbReference>
<dbReference type="NCBIfam" id="NF004362">
    <property type="entry name" value="PRK05738.2-2"/>
    <property type="match status" value="1"/>
</dbReference>
<dbReference type="Pfam" id="PF00276">
    <property type="entry name" value="Ribosomal_L23"/>
    <property type="match status" value="1"/>
</dbReference>
<dbReference type="SUPFAM" id="SSF54189">
    <property type="entry name" value="Ribosomal proteins S24e, L23 and L15e"/>
    <property type="match status" value="1"/>
</dbReference>
<reference key="1">
    <citation type="submission" date="2007-07" db="EMBL/GenBank/DDBJ databases">
        <title>Complete genome sequence of Campylobacter hominis ATCC BAA-381, a commensal isolated from the human gastrointestinal tract.</title>
        <authorList>
            <person name="Fouts D.E."/>
            <person name="Mongodin E.F."/>
            <person name="Puiu D."/>
            <person name="Sebastian Y."/>
            <person name="Miller W.G."/>
            <person name="Mandrell R.E."/>
            <person name="Nelson K.E."/>
        </authorList>
    </citation>
    <scope>NUCLEOTIDE SEQUENCE [LARGE SCALE GENOMIC DNA]</scope>
    <source>
        <strain>ATCC BAA-381 / DSM 21671 / CCUG 45161 / LMG 19568 / NCTC 13146 / CH001A</strain>
    </source>
</reference>
<organism>
    <name type="scientific">Campylobacter hominis (strain ATCC BAA-381 / DSM 21671 / CCUG 45161 / LMG 19568 / NCTC 13146 / CH001A)</name>
    <dbReference type="NCBI Taxonomy" id="360107"/>
    <lineage>
        <taxon>Bacteria</taxon>
        <taxon>Pseudomonadati</taxon>
        <taxon>Campylobacterota</taxon>
        <taxon>Epsilonproteobacteria</taxon>
        <taxon>Campylobacterales</taxon>
        <taxon>Campylobacteraceae</taxon>
        <taxon>Campylobacter</taxon>
    </lineage>
</organism>
<gene>
    <name evidence="1" type="primary">rplW</name>
    <name type="ordered locus">CHAB381_0086</name>
</gene>
<name>RL23_CAMHC</name>
<proteinExistence type="inferred from homology"/>
<comment type="function">
    <text evidence="1">One of the early assembly proteins it binds 23S rRNA. One of the proteins that surrounds the polypeptide exit tunnel on the outside of the ribosome. Forms the main docking site for trigger factor binding to the ribosome.</text>
</comment>
<comment type="subunit">
    <text evidence="1">Part of the 50S ribosomal subunit. Contacts protein L29, and trigger factor when it is bound to the ribosome.</text>
</comment>
<comment type="similarity">
    <text evidence="1">Belongs to the universal ribosomal protein uL23 family.</text>
</comment>
<evidence type="ECO:0000255" key="1">
    <source>
        <dbReference type="HAMAP-Rule" id="MF_01369"/>
    </source>
</evidence>
<evidence type="ECO:0000305" key="2"/>
<keyword id="KW-1185">Reference proteome</keyword>
<keyword id="KW-0687">Ribonucleoprotein</keyword>
<keyword id="KW-0689">Ribosomal protein</keyword>
<keyword id="KW-0694">RNA-binding</keyword>
<keyword id="KW-0699">rRNA-binding</keyword>
<feature type="chain" id="PRO_1000144546" description="Large ribosomal subunit protein uL23">
    <location>
        <begin position="1"/>
        <end position="93"/>
    </location>
</feature>
<protein>
    <recommendedName>
        <fullName evidence="1">Large ribosomal subunit protein uL23</fullName>
    </recommendedName>
    <alternativeName>
        <fullName evidence="2">50S ribosomal protein L23</fullName>
    </alternativeName>
</protein>
<accession>A7HZK8</accession>